<comment type="function">
    <text>Plays an important role in growth control. Its major role in stimulating body growth is to stimulate the liver and other tissues to secrete IGF1. It stimulates both the differentiation and proliferation of myoblasts. It also stimulates amino acid uptake and protein synthesis in muscle and other tissues.</text>
</comment>
<comment type="subcellular location">
    <subcellularLocation>
        <location>Secreted</location>
    </subcellularLocation>
</comment>
<comment type="similarity">
    <text evidence="3">Belongs to the somatotropin/prolactin family.</text>
</comment>
<protein>
    <recommendedName>
        <fullName>Somatotropin</fullName>
    </recommendedName>
    <alternativeName>
        <fullName>Growth hormone</fullName>
    </alternativeName>
</protein>
<feature type="signal peptide" evidence="1">
    <location>
        <begin position="1"/>
        <end position="26"/>
    </location>
</feature>
<feature type="chain" id="PRO_0000032978" description="Somatotropin">
    <location>
        <begin position="27"/>
        <end position="216"/>
    </location>
</feature>
<feature type="binding site" evidence="1">
    <location>
        <position position="45"/>
    </location>
    <ligand>
        <name>Zn(2+)</name>
        <dbReference type="ChEBI" id="CHEBI:29105"/>
    </ligand>
</feature>
<feature type="binding site" evidence="1">
    <location>
        <position position="198"/>
    </location>
    <ligand>
        <name>Zn(2+)</name>
        <dbReference type="ChEBI" id="CHEBI:29105"/>
    </ligand>
</feature>
<feature type="modified residue" description="Phosphoserine" evidence="2">
    <location>
        <position position="131"/>
    </location>
</feature>
<feature type="disulfide bond" evidence="1">
    <location>
        <begin position="78"/>
        <end position="189"/>
    </location>
</feature>
<feature type="disulfide bond" evidence="1">
    <location>
        <begin position="206"/>
        <end position="214"/>
    </location>
</feature>
<feature type="sequence conflict" description="In Ref. 1; CAA80601." evidence="3" ref="1">
    <original>S</original>
    <variation>G</variation>
    <location>
        <position position="4"/>
    </location>
</feature>
<feature type="sequence conflict" description="In Ref. 1; CAA80601." evidence="3" ref="1">
    <original>N</original>
    <variation>T</variation>
    <location>
        <position position="7"/>
    </location>
</feature>
<organism>
    <name type="scientific">Canis lupus familiaris</name>
    <name type="common">Dog</name>
    <name type="synonym">Canis familiaris</name>
    <dbReference type="NCBI Taxonomy" id="9615"/>
    <lineage>
        <taxon>Eukaryota</taxon>
        <taxon>Metazoa</taxon>
        <taxon>Chordata</taxon>
        <taxon>Craniata</taxon>
        <taxon>Vertebrata</taxon>
        <taxon>Euteleostomi</taxon>
        <taxon>Mammalia</taxon>
        <taxon>Eutheria</taxon>
        <taxon>Laurasiatheria</taxon>
        <taxon>Carnivora</taxon>
        <taxon>Caniformia</taxon>
        <taxon>Canidae</taxon>
        <taxon>Canis</taxon>
    </lineage>
</organism>
<sequence length="216" mass="24468">MAASPRNSVLLAFALLCLPWPQEVGAFPAMPLSSLFANAVLRAQHLHQLAADTYKEFERAYIPEGQRYSIQNAQAAFCFSETIPAPTGKDEAQQRSDVELLRFSLLLIQSWLGPVQFLSRVFTNSLVFGTSDRVYEKLKDLEEGIQALMRELEDGSPRAGQILKQTYDKFDTNLRSDDALLKNYGLLSCFKKDLHKAETYLRVMKCRRFVESSCAF</sequence>
<dbReference type="EMBL" id="Z23067">
    <property type="protein sequence ID" value="CAA80601.1"/>
    <property type="molecule type" value="mRNA"/>
</dbReference>
<dbReference type="EMBL" id="U92533">
    <property type="protein sequence ID" value="AAF21502.1"/>
    <property type="molecule type" value="Genomic_DNA"/>
</dbReference>
<dbReference type="EMBL" id="AF069071">
    <property type="protein sequence ID" value="AAD43366.1"/>
    <property type="molecule type" value="mRNA"/>
</dbReference>
<dbReference type="PIR" id="I46145">
    <property type="entry name" value="I46145"/>
</dbReference>
<dbReference type="RefSeq" id="NP_001003168.1">
    <property type="nucleotide sequence ID" value="NM_001003168.1"/>
</dbReference>
<dbReference type="RefSeq" id="XP_005624232.1">
    <property type="nucleotide sequence ID" value="XM_005624175.2"/>
</dbReference>
<dbReference type="SMR" id="P33711"/>
<dbReference type="FunCoup" id="P33711">
    <property type="interactions" value="37"/>
</dbReference>
<dbReference type="STRING" id="9615.ENSCAFP00000018659"/>
<dbReference type="PaxDb" id="9612-ENSCAFP00000018659"/>
<dbReference type="Ensembl" id="ENSCAFT00000020118.2">
    <property type="protein sequence ID" value="ENSCAFP00000018659.1"/>
    <property type="gene ID" value="ENSCAFG00000012681.3"/>
</dbReference>
<dbReference type="Ensembl" id="ENSCAFT00030026701.1">
    <property type="protein sequence ID" value="ENSCAFP00030023307.1"/>
    <property type="gene ID" value="ENSCAFG00030014381.1"/>
</dbReference>
<dbReference type="Ensembl" id="ENSCAFT00040032741.1">
    <property type="protein sequence ID" value="ENSCAFP00040028484.1"/>
    <property type="gene ID" value="ENSCAFG00040017587.1"/>
</dbReference>
<dbReference type="Ensembl" id="ENSCAFT00845037520.1">
    <property type="protein sequence ID" value="ENSCAFP00845029397.1"/>
    <property type="gene ID" value="ENSCAFG00845021230.1"/>
</dbReference>
<dbReference type="GeneID" id="403795"/>
<dbReference type="KEGG" id="cfa:403795"/>
<dbReference type="CTD" id="2688"/>
<dbReference type="VEuPathDB" id="HostDB:ENSCAFG00845021230"/>
<dbReference type="eggNOG" id="ENOG502R5GJ">
    <property type="taxonomic scope" value="Eukaryota"/>
</dbReference>
<dbReference type="GeneTree" id="ENSGT00950000182818"/>
<dbReference type="HOGENOM" id="CLU_088274_2_1_1"/>
<dbReference type="InParanoid" id="P33711"/>
<dbReference type="OMA" id="VAYCYSE"/>
<dbReference type="OrthoDB" id="9925773at2759"/>
<dbReference type="TreeFam" id="TF332592"/>
<dbReference type="Reactome" id="R-CFA-1170546">
    <property type="pathway name" value="Prolactin receptor signaling"/>
</dbReference>
<dbReference type="Reactome" id="R-CFA-422085">
    <property type="pathway name" value="Synthesis, secretion, and deacylation of Ghrelin"/>
</dbReference>
<dbReference type="Reactome" id="R-CFA-982772">
    <property type="pathway name" value="Growth hormone receptor signaling"/>
</dbReference>
<dbReference type="Proteomes" id="UP000002254">
    <property type="component" value="Chromosome 9"/>
</dbReference>
<dbReference type="Proteomes" id="UP000694429">
    <property type="component" value="Chromosome 9"/>
</dbReference>
<dbReference type="Proteomes" id="UP000694542">
    <property type="component" value="Chromosome 9"/>
</dbReference>
<dbReference type="Proteomes" id="UP000805418">
    <property type="component" value="Chromosome 9"/>
</dbReference>
<dbReference type="Bgee" id="ENSCAFG00000012681">
    <property type="expression patterns" value="Expressed in pituitary gland and 43 other cell types or tissues"/>
</dbReference>
<dbReference type="GO" id="GO:0005615">
    <property type="term" value="C:extracellular space"/>
    <property type="evidence" value="ECO:0000318"/>
    <property type="project" value="GO_Central"/>
</dbReference>
<dbReference type="GO" id="GO:0005634">
    <property type="term" value="C:nucleus"/>
    <property type="evidence" value="ECO:0007669"/>
    <property type="project" value="Ensembl"/>
</dbReference>
<dbReference type="GO" id="GO:0005886">
    <property type="term" value="C:plasma membrane"/>
    <property type="evidence" value="ECO:0007669"/>
    <property type="project" value="Ensembl"/>
</dbReference>
<dbReference type="GO" id="GO:0030141">
    <property type="term" value="C:secretory granule"/>
    <property type="evidence" value="ECO:0007669"/>
    <property type="project" value="Ensembl"/>
</dbReference>
<dbReference type="GO" id="GO:0005802">
    <property type="term" value="C:trans-Golgi network"/>
    <property type="evidence" value="ECO:0007669"/>
    <property type="project" value="Ensembl"/>
</dbReference>
<dbReference type="GO" id="GO:0008083">
    <property type="term" value="F:growth factor activity"/>
    <property type="evidence" value="ECO:0000318"/>
    <property type="project" value="GO_Central"/>
</dbReference>
<dbReference type="GO" id="GO:0005131">
    <property type="term" value="F:growth hormone receptor binding"/>
    <property type="evidence" value="ECO:0000318"/>
    <property type="project" value="GO_Central"/>
</dbReference>
<dbReference type="GO" id="GO:0005179">
    <property type="term" value="F:hormone activity"/>
    <property type="evidence" value="ECO:0000318"/>
    <property type="project" value="GO_Central"/>
</dbReference>
<dbReference type="GO" id="GO:0046872">
    <property type="term" value="F:metal ion binding"/>
    <property type="evidence" value="ECO:0007669"/>
    <property type="project" value="UniProtKB-KW"/>
</dbReference>
<dbReference type="GO" id="GO:0048513">
    <property type="term" value="P:animal organ development"/>
    <property type="evidence" value="ECO:0000318"/>
    <property type="project" value="GO_Central"/>
</dbReference>
<dbReference type="GO" id="GO:0032869">
    <property type="term" value="P:cellular response to insulin stimulus"/>
    <property type="evidence" value="ECO:0007669"/>
    <property type="project" value="Ensembl"/>
</dbReference>
<dbReference type="GO" id="GO:0060396">
    <property type="term" value="P:growth hormone receptor signaling pathway"/>
    <property type="evidence" value="ECO:0000318"/>
    <property type="project" value="GO_Central"/>
</dbReference>
<dbReference type="GO" id="GO:0040018">
    <property type="term" value="P:positive regulation of multicellular organism growth"/>
    <property type="evidence" value="ECO:0007669"/>
    <property type="project" value="Ensembl"/>
</dbReference>
<dbReference type="GO" id="GO:0046427">
    <property type="term" value="P:positive regulation of receptor signaling pathway via JAK-STAT"/>
    <property type="evidence" value="ECO:0000318"/>
    <property type="project" value="GO_Central"/>
</dbReference>
<dbReference type="GO" id="GO:0032094">
    <property type="term" value="P:response to food"/>
    <property type="evidence" value="ECO:0007669"/>
    <property type="project" value="Ensembl"/>
</dbReference>
<dbReference type="GO" id="GO:0031667">
    <property type="term" value="P:response to nutrient levels"/>
    <property type="evidence" value="ECO:0000318"/>
    <property type="project" value="GO_Central"/>
</dbReference>
<dbReference type="CDD" id="cd10285">
    <property type="entry name" value="somatotropin_like"/>
    <property type="match status" value="1"/>
</dbReference>
<dbReference type="FunFam" id="1.20.1250.10:FF:000002">
    <property type="entry name" value="Growth hormone"/>
    <property type="match status" value="1"/>
</dbReference>
<dbReference type="Gene3D" id="1.20.1250.10">
    <property type="match status" value="1"/>
</dbReference>
<dbReference type="InterPro" id="IPR009079">
    <property type="entry name" value="4_helix_cytokine-like_core"/>
</dbReference>
<dbReference type="InterPro" id="IPR034975">
    <property type="entry name" value="Somatotropin"/>
</dbReference>
<dbReference type="InterPro" id="IPR001400">
    <property type="entry name" value="Somatotropin/Prolactin"/>
</dbReference>
<dbReference type="InterPro" id="IPR018116">
    <property type="entry name" value="Somatotropin_CS"/>
</dbReference>
<dbReference type="PANTHER" id="PTHR11417:SF2">
    <property type="entry name" value="SOMATOTROPIN"/>
    <property type="match status" value="1"/>
</dbReference>
<dbReference type="PANTHER" id="PTHR11417">
    <property type="entry name" value="SOMATOTROPIN,PROLACTIN"/>
    <property type="match status" value="1"/>
</dbReference>
<dbReference type="Pfam" id="PF00103">
    <property type="entry name" value="Hormone_1"/>
    <property type="match status" value="1"/>
</dbReference>
<dbReference type="PRINTS" id="PR00836">
    <property type="entry name" value="SOMATOTROPIN"/>
</dbReference>
<dbReference type="SUPFAM" id="SSF47266">
    <property type="entry name" value="4-helical cytokines"/>
    <property type="match status" value="1"/>
</dbReference>
<dbReference type="PROSITE" id="PS00266">
    <property type="entry name" value="SOMATOTROPIN_1"/>
    <property type="match status" value="1"/>
</dbReference>
<dbReference type="PROSITE" id="PS00338">
    <property type="entry name" value="SOMATOTROPIN_2"/>
    <property type="match status" value="1"/>
</dbReference>
<gene>
    <name type="primary">GH1</name>
    <name type="synonym">GH</name>
</gene>
<proteinExistence type="evidence at transcript level"/>
<evidence type="ECO:0000250" key="1"/>
<evidence type="ECO:0000250" key="2">
    <source>
        <dbReference type="UniProtKB" id="P01241"/>
    </source>
</evidence>
<evidence type="ECO:0000305" key="3"/>
<accession>P33711</accession>
<accession>Q9TQT6</accession>
<reference key="1">
    <citation type="journal article" date="1994" name="Gene">
        <title>A dog growth hormone cDNA codes for a mature protein identical to pig growth hormone.</title>
        <authorList>
            <person name="Ascacio-Martinez J.A."/>
            <person name="Barrera-Saldana H.A."/>
        </authorList>
    </citation>
    <scope>NUCLEOTIDE SEQUENCE [MRNA]</scope>
</reference>
<reference key="2">
    <citation type="submission" date="1997-03" db="EMBL/GenBank/DDBJ databases">
        <title>Extrapituitary growth hormone expression in the dog is initiated at the normal pituitary transcription start site in the mammary gland and at multiple upstream sites in lymphoid cells.</title>
        <authorList>
            <person name="van Leeuwen I.S."/>
            <person name="Teske E."/>
            <person name="van Garderen E."/>
            <person name="Rutteman G.R."/>
            <person name="Mol J.A."/>
        </authorList>
    </citation>
    <scope>NUCLEOTIDE SEQUENCE [GENOMIC DNA]</scope>
</reference>
<reference key="3">
    <citation type="journal article" date="1999" name="Mol. Cell. Endocrinol.">
        <title>Canine mammary growth hormone gene transcription initiates at the pituitary-specific start site in the absence of Pit-1.</title>
        <authorList>
            <person name="Lantinga-van Leeuwen I.S."/>
            <person name="Oudshoorn M."/>
            <person name="Mol J.A."/>
        </authorList>
    </citation>
    <scope>NUCLEOTIDE SEQUENCE [MRNA]</scope>
    <source>
        <tissue>Mammary gland</tissue>
    </source>
</reference>
<name>SOMA_CANLF</name>
<keyword id="KW-1015">Disulfide bond</keyword>
<keyword id="KW-0372">Hormone</keyword>
<keyword id="KW-0479">Metal-binding</keyword>
<keyword id="KW-0597">Phosphoprotein</keyword>
<keyword id="KW-1185">Reference proteome</keyword>
<keyword id="KW-0964">Secreted</keyword>
<keyword id="KW-0732">Signal</keyword>
<keyword id="KW-0862">Zinc</keyword>